<sequence length="220" mass="25335">MVLKTIEYDYLCKIVVIGDSGVGKSNLLSRYNKNEFSVGKLSTIGVEFSTKTLKIDNKLIKLQLWDTAGQEKYNSITESYYKGAIGALIVYNIADRNSFNNLEKWLKKFRENAHQDYGIMLVGNKSDLKEYREVSTLEGKQFAEKHYMQFIETSALDSNNVETAFNNLFNFIYYSLFKNKTMTLDINNNGNNNSNIMVGDCEPIQFDQRYTINKPVYDCC</sequence>
<reference key="1">
    <citation type="journal article" date="1998" name="J. Cell. Biochem.">
        <title>Cloning and characterization of a Dictyostelium gene encoding a small GTPase of the Rab11 family.</title>
        <authorList>
            <person name="Dragoi I.A."/>
            <person name="O'Halloran T.J."/>
        </authorList>
    </citation>
    <scope>NUCLEOTIDE SEQUENCE [GENOMIC DNA]</scope>
    <scope>DEVELOPMENTAL STAGE</scope>
    <scope>DISRUPTION PHENOTYPE</scope>
    <source>
        <strain>AX3 / DH1</strain>
    </source>
</reference>
<reference key="2">
    <citation type="journal article" date="2005" name="Nature">
        <title>The genome of the social amoeba Dictyostelium discoideum.</title>
        <authorList>
            <person name="Eichinger L."/>
            <person name="Pachebat J.A."/>
            <person name="Gloeckner G."/>
            <person name="Rajandream M.A."/>
            <person name="Sucgang R."/>
            <person name="Berriman M."/>
            <person name="Song J."/>
            <person name="Olsen R."/>
            <person name="Szafranski K."/>
            <person name="Xu Q."/>
            <person name="Tunggal B."/>
            <person name="Kummerfeld S."/>
            <person name="Madera M."/>
            <person name="Konfortov B.A."/>
            <person name="Rivero F."/>
            <person name="Bankier A.T."/>
            <person name="Lehmann R."/>
            <person name="Hamlin N."/>
            <person name="Davies R."/>
            <person name="Gaudet P."/>
            <person name="Fey P."/>
            <person name="Pilcher K."/>
            <person name="Chen G."/>
            <person name="Saunders D."/>
            <person name="Sodergren E.J."/>
            <person name="Davis P."/>
            <person name="Kerhornou A."/>
            <person name="Nie X."/>
            <person name="Hall N."/>
            <person name="Anjard C."/>
            <person name="Hemphill L."/>
            <person name="Bason N."/>
            <person name="Farbrother P."/>
            <person name="Desany B."/>
            <person name="Just E."/>
            <person name="Morio T."/>
            <person name="Rost R."/>
            <person name="Churcher C.M."/>
            <person name="Cooper J."/>
            <person name="Haydock S."/>
            <person name="van Driessche N."/>
            <person name="Cronin A."/>
            <person name="Goodhead I."/>
            <person name="Muzny D.M."/>
            <person name="Mourier T."/>
            <person name="Pain A."/>
            <person name="Lu M."/>
            <person name="Harper D."/>
            <person name="Lindsay R."/>
            <person name="Hauser H."/>
            <person name="James K.D."/>
            <person name="Quiles M."/>
            <person name="Madan Babu M."/>
            <person name="Saito T."/>
            <person name="Buchrieser C."/>
            <person name="Wardroper A."/>
            <person name="Felder M."/>
            <person name="Thangavelu M."/>
            <person name="Johnson D."/>
            <person name="Knights A."/>
            <person name="Loulseged H."/>
            <person name="Mungall K.L."/>
            <person name="Oliver K."/>
            <person name="Price C."/>
            <person name="Quail M.A."/>
            <person name="Urushihara H."/>
            <person name="Hernandez J."/>
            <person name="Rabbinowitsch E."/>
            <person name="Steffen D."/>
            <person name="Sanders M."/>
            <person name="Ma J."/>
            <person name="Kohara Y."/>
            <person name="Sharp S."/>
            <person name="Simmonds M.N."/>
            <person name="Spiegler S."/>
            <person name="Tivey A."/>
            <person name="Sugano S."/>
            <person name="White B."/>
            <person name="Walker D."/>
            <person name="Woodward J.R."/>
            <person name="Winckler T."/>
            <person name="Tanaka Y."/>
            <person name="Shaulsky G."/>
            <person name="Schleicher M."/>
            <person name="Weinstock G.M."/>
            <person name="Rosenthal A."/>
            <person name="Cox E.C."/>
            <person name="Chisholm R.L."/>
            <person name="Gibbs R.A."/>
            <person name="Loomis W.F."/>
            <person name="Platzer M."/>
            <person name="Kay R.R."/>
            <person name="Williams J.G."/>
            <person name="Dear P.H."/>
            <person name="Noegel A.A."/>
            <person name="Barrell B.G."/>
            <person name="Kuspa A."/>
        </authorList>
    </citation>
    <scope>NUCLEOTIDE SEQUENCE [LARGE SCALE GENOMIC DNA]</scope>
    <source>
        <strain>AX4</strain>
    </source>
</reference>
<feature type="chain" id="PRO_0000312421" description="Ras-related protein Rab-11B">
    <location>
        <begin position="1"/>
        <end position="220"/>
    </location>
</feature>
<feature type="short sequence motif" description="Effector region" evidence="1">
    <location>
        <begin position="40"/>
        <end position="48"/>
    </location>
</feature>
<feature type="binding site" evidence="1">
    <location>
        <begin position="18"/>
        <end position="25"/>
    </location>
    <ligand>
        <name>GTP</name>
        <dbReference type="ChEBI" id="CHEBI:37565"/>
    </ligand>
</feature>
<feature type="binding site" evidence="1">
    <location>
        <begin position="66"/>
        <end position="70"/>
    </location>
    <ligand>
        <name>GTP</name>
        <dbReference type="ChEBI" id="CHEBI:37565"/>
    </ligand>
</feature>
<feature type="binding site" evidence="1">
    <location>
        <begin position="124"/>
        <end position="127"/>
    </location>
    <ligand>
        <name>GTP</name>
        <dbReference type="ChEBI" id="CHEBI:37565"/>
    </ligand>
</feature>
<feature type="lipid moiety-binding region" description="S-geranylgeranyl cysteine" evidence="1">
    <location>
        <position position="219"/>
    </location>
</feature>
<feature type="lipid moiety-binding region" description="S-geranylgeranyl cysteine" evidence="1">
    <location>
        <position position="220"/>
    </location>
</feature>
<organism>
    <name type="scientific">Dictyostelium discoideum</name>
    <name type="common">Social amoeba</name>
    <dbReference type="NCBI Taxonomy" id="44689"/>
    <lineage>
        <taxon>Eukaryota</taxon>
        <taxon>Amoebozoa</taxon>
        <taxon>Evosea</taxon>
        <taxon>Eumycetozoa</taxon>
        <taxon>Dictyostelia</taxon>
        <taxon>Dictyosteliales</taxon>
        <taxon>Dictyosteliaceae</taxon>
        <taxon>Dictyostelium</taxon>
    </lineage>
</organism>
<gene>
    <name type="primary">rab11B</name>
    <name type="ORF">DDB_G0287211</name>
</gene>
<keyword id="KW-1003">Cell membrane</keyword>
<keyword id="KW-0342">GTP-binding</keyword>
<keyword id="KW-0449">Lipoprotein</keyword>
<keyword id="KW-0472">Membrane</keyword>
<keyword id="KW-0547">Nucleotide-binding</keyword>
<keyword id="KW-0636">Prenylation</keyword>
<keyword id="KW-0653">Protein transport</keyword>
<keyword id="KW-1185">Reference proteome</keyword>
<keyword id="KW-0813">Transport</keyword>
<proteinExistence type="evidence at transcript level"/>
<comment type="subcellular location">
    <subcellularLocation>
        <location evidence="3">Cell membrane</location>
        <topology evidence="3">Lipid-anchor</topology>
        <orientation evidence="3">Cytoplasmic side</orientation>
    </subcellularLocation>
</comment>
<comment type="developmental stage">
    <text evidence="2">Expressed at uniform levels throughout growth and development.</text>
</comment>
<comment type="disruption phenotype">
    <text evidence="2">Mutants exhibit normal growth and development, and endocytosis and the structure of membrane-bound organelles is unaffected.</text>
</comment>
<comment type="similarity">
    <text evidence="3">Belongs to the small GTPase superfamily. Rab family.</text>
</comment>
<evidence type="ECO:0000250" key="1"/>
<evidence type="ECO:0000269" key="2">
    <source>
    </source>
</evidence>
<evidence type="ECO:0000305" key="3"/>
<name>RB11B_DICDI</name>
<dbReference type="EMBL" id="AF037357">
    <property type="protein sequence ID" value="AAB92559.1"/>
    <property type="molecule type" value="Genomic_DNA"/>
</dbReference>
<dbReference type="EMBL" id="AAFI02000099">
    <property type="protein sequence ID" value="EAL63807.1"/>
    <property type="molecule type" value="Genomic_DNA"/>
</dbReference>
<dbReference type="RefSeq" id="XP_637328.1">
    <property type="nucleotide sequence ID" value="XM_632236.1"/>
</dbReference>
<dbReference type="SMR" id="Q54KM9"/>
<dbReference type="FunCoup" id="Q54KM9">
    <property type="interactions" value="79"/>
</dbReference>
<dbReference type="STRING" id="44689.Q54KM9"/>
<dbReference type="PaxDb" id="44689-DDB0191421"/>
<dbReference type="EnsemblProtists" id="EAL63807">
    <property type="protein sequence ID" value="EAL63807"/>
    <property type="gene ID" value="DDB_G0287211"/>
</dbReference>
<dbReference type="GeneID" id="8626026"/>
<dbReference type="KEGG" id="ddi:DDB_G0287211"/>
<dbReference type="dictyBase" id="DDB_G0287211">
    <property type="gene designation" value="rab11B"/>
</dbReference>
<dbReference type="VEuPathDB" id="AmoebaDB:DDB_G0287211"/>
<dbReference type="eggNOG" id="KOG0087">
    <property type="taxonomic scope" value="Eukaryota"/>
</dbReference>
<dbReference type="HOGENOM" id="CLU_041217_23_2_1"/>
<dbReference type="InParanoid" id="Q54KM9"/>
<dbReference type="OMA" id="QELNTHC"/>
<dbReference type="PhylomeDB" id="Q54KM9"/>
<dbReference type="PRO" id="PR:Q54KM9"/>
<dbReference type="Proteomes" id="UP000002195">
    <property type="component" value="Chromosome 5"/>
</dbReference>
<dbReference type="GO" id="GO:0012505">
    <property type="term" value="C:endomembrane system"/>
    <property type="evidence" value="ECO:0000318"/>
    <property type="project" value="GO_Central"/>
</dbReference>
<dbReference type="GO" id="GO:0005886">
    <property type="term" value="C:plasma membrane"/>
    <property type="evidence" value="ECO:0007669"/>
    <property type="project" value="UniProtKB-SubCell"/>
</dbReference>
<dbReference type="GO" id="GO:0005525">
    <property type="term" value="F:GTP binding"/>
    <property type="evidence" value="ECO:0000250"/>
    <property type="project" value="UniProtKB"/>
</dbReference>
<dbReference type="GO" id="GO:0003924">
    <property type="term" value="F:GTPase activity"/>
    <property type="evidence" value="ECO:0000318"/>
    <property type="project" value="GO_Central"/>
</dbReference>
<dbReference type="GO" id="GO:0000166">
    <property type="term" value="F:nucleotide binding"/>
    <property type="evidence" value="ECO:0000250"/>
    <property type="project" value="UniProtKB"/>
</dbReference>
<dbReference type="GO" id="GO:0006971">
    <property type="term" value="P:hypotonic response"/>
    <property type="evidence" value="ECO:0007007"/>
    <property type="project" value="dictyBase"/>
</dbReference>
<dbReference type="GO" id="GO:0006886">
    <property type="term" value="P:intracellular protein transport"/>
    <property type="evidence" value="ECO:0000318"/>
    <property type="project" value="GO_Central"/>
</dbReference>
<dbReference type="GO" id="GO:0007264">
    <property type="term" value="P:small GTPase-mediated signal transduction"/>
    <property type="evidence" value="ECO:0000250"/>
    <property type="project" value="UniProtKB"/>
</dbReference>
<dbReference type="CDD" id="cd01868">
    <property type="entry name" value="Rab11_like"/>
    <property type="match status" value="1"/>
</dbReference>
<dbReference type="FunFam" id="3.40.50.300:FF:000067">
    <property type="entry name" value="ras-related protein RABA1f"/>
    <property type="match status" value="1"/>
</dbReference>
<dbReference type="Gene3D" id="3.40.50.300">
    <property type="entry name" value="P-loop containing nucleotide triphosphate hydrolases"/>
    <property type="match status" value="1"/>
</dbReference>
<dbReference type="InterPro" id="IPR027417">
    <property type="entry name" value="P-loop_NTPase"/>
</dbReference>
<dbReference type="InterPro" id="IPR050209">
    <property type="entry name" value="Rab_GTPases_membrane_traffic"/>
</dbReference>
<dbReference type="InterPro" id="IPR005225">
    <property type="entry name" value="Small_GTP-bd"/>
</dbReference>
<dbReference type="InterPro" id="IPR001806">
    <property type="entry name" value="Small_GTPase"/>
</dbReference>
<dbReference type="NCBIfam" id="TIGR00231">
    <property type="entry name" value="small_GTP"/>
    <property type="match status" value="1"/>
</dbReference>
<dbReference type="PANTHER" id="PTHR47979">
    <property type="entry name" value="DRAB11-RELATED"/>
    <property type="match status" value="1"/>
</dbReference>
<dbReference type="Pfam" id="PF00071">
    <property type="entry name" value="Ras"/>
    <property type="match status" value="1"/>
</dbReference>
<dbReference type="PRINTS" id="PR00449">
    <property type="entry name" value="RASTRNSFRMNG"/>
</dbReference>
<dbReference type="SMART" id="SM00175">
    <property type="entry name" value="RAB"/>
    <property type="match status" value="1"/>
</dbReference>
<dbReference type="SMART" id="SM00176">
    <property type="entry name" value="RAN"/>
    <property type="match status" value="1"/>
</dbReference>
<dbReference type="SMART" id="SM00173">
    <property type="entry name" value="RAS"/>
    <property type="match status" value="1"/>
</dbReference>
<dbReference type="SMART" id="SM00174">
    <property type="entry name" value="RHO"/>
    <property type="match status" value="1"/>
</dbReference>
<dbReference type="SUPFAM" id="SSF52540">
    <property type="entry name" value="P-loop containing nucleoside triphosphate hydrolases"/>
    <property type="match status" value="1"/>
</dbReference>
<dbReference type="PROSITE" id="PS51419">
    <property type="entry name" value="RAB"/>
    <property type="match status" value="1"/>
</dbReference>
<accession>Q54KM9</accession>
<accession>O43991</accession>
<protein>
    <recommendedName>
        <fullName>Ras-related protein Rab-11B</fullName>
    </recommendedName>
</protein>